<organism>
    <name type="scientific">Metamycoplasma hominis (strain ATCC 23114 / DSM 25592 / NBRC 14850 / NCTC 10111 / PG21)</name>
    <name type="common">Mycoplasma hominis</name>
    <dbReference type="NCBI Taxonomy" id="347256"/>
    <lineage>
        <taxon>Bacteria</taxon>
        <taxon>Bacillati</taxon>
        <taxon>Mycoplasmatota</taxon>
        <taxon>Mycoplasmoidales</taxon>
        <taxon>Metamycoplasmataceae</taxon>
        <taxon>Metamycoplasma</taxon>
    </lineage>
</organism>
<evidence type="ECO:0000250" key="1"/>
<evidence type="ECO:0000255" key="2">
    <source>
        <dbReference type="HAMAP-Rule" id="MF_00118"/>
    </source>
</evidence>
<evidence type="ECO:0000305" key="3"/>
<name>EFTU_METH1</name>
<gene>
    <name evidence="2" type="primary">tuf</name>
    <name type="ordered locus">MHO_0520</name>
</gene>
<comment type="function">
    <text evidence="2">GTP hydrolase that promotes the GTP-dependent binding of aminoacyl-tRNA to the A-site of ribosomes during protein biosynthesis.</text>
</comment>
<comment type="catalytic activity">
    <reaction evidence="2">
        <text>GTP + H2O = GDP + phosphate + H(+)</text>
        <dbReference type="Rhea" id="RHEA:19669"/>
        <dbReference type="ChEBI" id="CHEBI:15377"/>
        <dbReference type="ChEBI" id="CHEBI:15378"/>
        <dbReference type="ChEBI" id="CHEBI:37565"/>
        <dbReference type="ChEBI" id="CHEBI:43474"/>
        <dbReference type="ChEBI" id="CHEBI:58189"/>
        <dbReference type="EC" id="3.6.5.3"/>
    </reaction>
    <physiologicalReaction direction="left-to-right" evidence="2">
        <dbReference type="Rhea" id="RHEA:19670"/>
    </physiologicalReaction>
</comment>
<comment type="subunit">
    <text evidence="2">Monomer.</text>
</comment>
<comment type="subcellular location">
    <subcellularLocation>
        <location>Cytoplasm</location>
    </subcellularLocation>
</comment>
<comment type="similarity">
    <text evidence="2">Belongs to the TRAFAC class translation factor GTPase superfamily. Classic translation factor GTPase family. EF-Tu/EF-1A subfamily.</text>
</comment>
<reference key="1">
    <citation type="journal article" date="1991" name="FEMS Microbiol. Lett.">
        <title>Analysis of the nucleotide sequence of the Mycoplasma hominis tuf gene and its flanking region.</title>
        <authorList>
            <person name="Ladefoged S.A."/>
            <person name="Christiansen G."/>
        </authorList>
    </citation>
    <scope>NUCLEOTIDE SEQUENCE [GENOMIC DNA]</scope>
</reference>
<reference key="2">
    <citation type="journal article" date="1991" name="Gene">
        <title>Sequence and expression in Escherichia coli of a Mycoplasma hominis gene encoding elongation factor Tu.</title>
        <authorList>
            <person name="Lueneberg E."/>
            <person name="Kamla V."/>
            <person name="Hadding U."/>
            <person name="Frosch M."/>
        </authorList>
    </citation>
    <scope>NUCLEOTIDE SEQUENCE [GENOMIC DNA]</scope>
    <scope>PROTEIN SEQUENCE OF 6-22</scope>
</reference>
<reference key="3">
    <citation type="journal article" date="2009" name="PLoS Genet.">
        <title>Life on arginine for Mycoplasma hominis: clues from its minimal genome and comparison with other human urogenital mycoplasmas.</title>
        <authorList>
            <person name="Pereyre S."/>
            <person name="Sirand-Pugnet P."/>
            <person name="Beven L."/>
            <person name="Charron A."/>
            <person name="Renaudin H."/>
            <person name="Barre A."/>
            <person name="Avenaud P."/>
            <person name="Jacob D."/>
            <person name="Couloux A."/>
            <person name="Barbe V."/>
            <person name="de Daruvar A."/>
            <person name="Blanchard A."/>
            <person name="Bebear C."/>
        </authorList>
    </citation>
    <scope>NUCLEOTIDE SEQUENCE [LARGE SCALE GENOMIC DNA]</scope>
    <source>
        <strain>ATCC 23114 / DSM 25592 / NBRC 14850 / NCTC 10111 / PG21</strain>
    </source>
</reference>
<accession>P22679</accession>
<accession>D1J7I9</accession>
<feature type="chain" id="PRO_0000091347" description="Elongation factor Tu">
    <location>
        <begin position="1"/>
        <end position="397"/>
    </location>
</feature>
<feature type="domain" description="tr-type G">
    <location>
        <begin position="10"/>
        <end position="207"/>
    </location>
</feature>
<feature type="region of interest" description="G1" evidence="1">
    <location>
        <begin position="19"/>
        <end position="26"/>
    </location>
</feature>
<feature type="region of interest" description="G2" evidence="1">
    <location>
        <begin position="60"/>
        <end position="64"/>
    </location>
</feature>
<feature type="region of interest" description="G3" evidence="1">
    <location>
        <begin position="81"/>
        <end position="84"/>
    </location>
</feature>
<feature type="region of interest" description="G4" evidence="1">
    <location>
        <begin position="136"/>
        <end position="139"/>
    </location>
</feature>
<feature type="region of interest" description="G5" evidence="1">
    <location>
        <begin position="177"/>
        <end position="179"/>
    </location>
</feature>
<feature type="binding site" evidence="2">
    <location>
        <begin position="19"/>
        <end position="26"/>
    </location>
    <ligand>
        <name>GTP</name>
        <dbReference type="ChEBI" id="CHEBI:37565"/>
    </ligand>
</feature>
<feature type="binding site" evidence="2">
    <location>
        <position position="26"/>
    </location>
    <ligand>
        <name>Mg(2+)</name>
        <dbReference type="ChEBI" id="CHEBI:18420"/>
    </ligand>
</feature>
<feature type="binding site" evidence="2">
    <location>
        <begin position="81"/>
        <end position="85"/>
    </location>
    <ligand>
        <name>GTP</name>
        <dbReference type="ChEBI" id="CHEBI:37565"/>
    </ligand>
</feature>
<feature type="binding site" evidence="2">
    <location>
        <begin position="136"/>
        <end position="139"/>
    </location>
    <ligand>
        <name>GTP</name>
        <dbReference type="ChEBI" id="CHEBI:37565"/>
    </ligand>
</feature>
<feature type="sequence conflict" description="In Ref. 2; AAA25411." evidence="3" ref="2">
    <original>T</original>
    <variation>A</variation>
    <location>
        <position position="342"/>
    </location>
</feature>
<protein>
    <recommendedName>
        <fullName evidence="2">Elongation factor Tu</fullName>
        <shortName evidence="2">EF-Tu</shortName>
        <ecNumber evidence="2">3.6.5.3</ecNumber>
    </recommendedName>
</protein>
<dbReference type="EC" id="3.6.5.3" evidence="2"/>
<dbReference type="EMBL" id="X57136">
    <property type="protein sequence ID" value="CAA40415.1"/>
    <property type="molecule type" value="Genomic_DNA"/>
</dbReference>
<dbReference type="EMBL" id="M57675">
    <property type="protein sequence ID" value="AAA25411.1"/>
    <property type="molecule type" value="Genomic_DNA"/>
</dbReference>
<dbReference type="EMBL" id="FP236530">
    <property type="protein sequence ID" value="CAX37186.1"/>
    <property type="molecule type" value="Genomic_DNA"/>
</dbReference>
<dbReference type="PIR" id="JH0416">
    <property type="entry name" value="JH0416"/>
</dbReference>
<dbReference type="RefSeq" id="WP_012855329.1">
    <property type="nucleotide sequence ID" value="NC_013511.1"/>
</dbReference>
<dbReference type="SMR" id="P22679"/>
<dbReference type="STRING" id="347256.MHO_0520"/>
<dbReference type="PaxDb" id="347256-MHO_0520"/>
<dbReference type="GeneID" id="89679108"/>
<dbReference type="KEGG" id="mho:MHO_0520"/>
<dbReference type="eggNOG" id="COG0050">
    <property type="taxonomic scope" value="Bacteria"/>
</dbReference>
<dbReference type="HOGENOM" id="CLU_007265_0_1_14"/>
<dbReference type="Proteomes" id="UP000002631">
    <property type="component" value="Chromosome"/>
</dbReference>
<dbReference type="GO" id="GO:0005829">
    <property type="term" value="C:cytosol"/>
    <property type="evidence" value="ECO:0007669"/>
    <property type="project" value="TreeGrafter"/>
</dbReference>
<dbReference type="GO" id="GO:0005525">
    <property type="term" value="F:GTP binding"/>
    <property type="evidence" value="ECO:0007669"/>
    <property type="project" value="UniProtKB-UniRule"/>
</dbReference>
<dbReference type="GO" id="GO:0003924">
    <property type="term" value="F:GTPase activity"/>
    <property type="evidence" value="ECO:0007669"/>
    <property type="project" value="InterPro"/>
</dbReference>
<dbReference type="GO" id="GO:0003746">
    <property type="term" value="F:translation elongation factor activity"/>
    <property type="evidence" value="ECO:0007669"/>
    <property type="project" value="UniProtKB-UniRule"/>
</dbReference>
<dbReference type="CDD" id="cd01884">
    <property type="entry name" value="EF_Tu"/>
    <property type="match status" value="1"/>
</dbReference>
<dbReference type="CDD" id="cd03697">
    <property type="entry name" value="EFTU_II"/>
    <property type="match status" value="1"/>
</dbReference>
<dbReference type="CDD" id="cd03707">
    <property type="entry name" value="EFTU_III"/>
    <property type="match status" value="1"/>
</dbReference>
<dbReference type="FunFam" id="2.40.30.10:FF:000001">
    <property type="entry name" value="Elongation factor Tu"/>
    <property type="match status" value="1"/>
</dbReference>
<dbReference type="FunFam" id="3.40.50.300:FF:000003">
    <property type="entry name" value="Elongation factor Tu"/>
    <property type="match status" value="1"/>
</dbReference>
<dbReference type="Gene3D" id="3.40.50.300">
    <property type="entry name" value="P-loop containing nucleotide triphosphate hydrolases"/>
    <property type="match status" value="1"/>
</dbReference>
<dbReference type="Gene3D" id="2.40.30.10">
    <property type="entry name" value="Translation factors"/>
    <property type="match status" value="2"/>
</dbReference>
<dbReference type="HAMAP" id="MF_00118_B">
    <property type="entry name" value="EF_Tu_B"/>
    <property type="match status" value="1"/>
</dbReference>
<dbReference type="InterPro" id="IPR041709">
    <property type="entry name" value="EF-Tu_GTP-bd"/>
</dbReference>
<dbReference type="InterPro" id="IPR050055">
    <property type="entry name" value="EF-Tu_GTPase"/>
</dbReference>
<dbReference type="InterPro" id="IPR004161">
    <property type="entry name" value="EFTu-like_2"/>
</dbReference>
<dbReference type="InterPro" id="IPR033720">
    <property type="entry name" value="EFTU_2"/>
</dbReference>
<dbReference type="InterPro" id="IPR031157">
    <property type="entry name" value="G_TR_CS"/>
</dbReference>
<dbReference type="InterPro" id="IPR027417">
    <property type="entry name" value="P-loop_NTPase"/>
</dbReference>
<dbReference type="InterPro" id="IPR005225">
    <property type="entry name" value="Small_GTP-bd"/>
</dbReference>
<dbReference type="InterPro" id="IPR000795">
    <property type="entry name" value="T_Tr_GTP-bd_dom"/>
</dbReference>
<dbReference type="InterPro" id="IPR009000">
    <property type="entry name" value="Transl_B-barrel_sf"/>
</dbReference>
<dbReference type="InterPro" id="IPR009001">
    <property type="entry name" value="Transl_elong_EF1A/Init_IF2_C"/>
</dbReference>
<dbReference type="InterPro" id="IPR004541">
    <property type="entry name" value="Transl_elong_EFTu/EF1A_bac/org"/>
</dbReference>
<dbReference type="InterPro" id="IPR004160">
    <property type="entry name" value="Transl_elong_EFTu/EF1A_C"/>
</dbReference>
<dbReference type="NCBIfam" id="TIGR00485">
    <property type="entry name" value="EF-Tu"/>
    <property type="match status" value="1"/>
</dbReference>
<dbReference type="NCBIfam" id="NF000766">
    <property type="entry name" value="PRK00049.1"/>
    <property type="match status" value="1"/>
</dbReference>
<dbReference type="NCBIfam" id="NF009372">
    <property type="entry name" value="PRK12735.1"/>
    <property type="match status" value="1"/>
</dbReference>
<dbReference type="NCBIfam" id="NF009373">
    <property type="entry name" value="PRK12736.1"/>
    <property type="match status" value="1"/>
</dbReference>
<dbReference type="NCBIfam" id="TIGR00231">
    <property type="entry name" value="small_GTP"/>
    <property type="match status" value="1"/>
</dbReference>
<dbReference type="PANTHER" id="PTHR43721:SF22">
    <property type="entry name" value="ELONGATION FACTOR TU, MITOCHONDRIAL"/>
    <property type="match status" value="1"/>
</dbReference>
<dbReference type="PANTHER" id="PTHR43721">
    <property type="entry name" value="ELONGATION FACTOR TU-RELATED"/>
    <property type="match status" value="1"/>
</dbReference>
<dbReference type="Pfam" id="PF00009">
    <property type="entry name" value="GTP_EFTU"/>
    <property type="match status" value="1"/>
</dbReference>
<dbReference type="Pfam" id="PF03144">
    <property type="entry name" value="GTP_EFTU_D2"/>
    <property type="match status" value="1"/>
</dbReference>
<dbReference type="Pfam" id="PF03143">
    <property type="entry name" value="GTP_EFTU_D3"/>
    <property type="match status" value="1"/>
</dbReference>
<dbReference type="PRINTS" id="PR00315">
    <property type="entry name" value="ELONGATNFCT"/>
</dbReference>
<dbReference type="SUPFAM" id="SSF50465">
    <property type="entry name" value="EF-Tu/eEF-1alpha/eIF2-gamma C-terminal domain"/>
    <property type="match status" value="1"/>
</dbReference>
<dbReference type="SUPFAM" id="SSF52540">
    <property type="entry name" value="P-loop containing nucleoside triphosphate hydrolases"/>
    <property type="match status" value="1"/>
</dbReference>
<dbReference type="SUPFAM" id="SSF50447">
    <property type="entry name" value="Translation proteins"/>
    <property type="match status" value="1"/>
</dbReference>
<dbReference type="PROSITE" id="PS00301">
    <property type="entry name" value="G_TR_1"/>
    <property type="match status" value="1"/>
</dbReference>
<dbReference type="PROSITE" id="PS51722">
    <property type="entry name" value="G_TR_2"/>
    <property type="match status" value="1"/>
</dbReference>
<sequence>MAKLDFDRSKPHVNIGTIGHVDHGKTTLTAAIATVLAKKGLAEARDYASIDNAPEEKARGITINTSHIEYQTEKRHYAHVDCPGHADYVKNMITGAAQMDGAILVVAATDGPMPQTREHILLARQVGVPKIVVFLNKIDMFKDDEREEMVGLVEMDVRSLLSEYGFDGDNAPIIAGSALKALQGDPEYEKGILELMDAVDTYIEEPKRETDKPFLMAVEDVFTITGRGTVATGRVERGVLQLNEEVEIVGLKPTKKTVVTGIEMFRKNLKEAQAGDNAGLLLRGIDRSEVERGQVLAKPKTIVPHTQFEATVYVLKKEEGGRHTPFFHNYKPQFYFRTTDVTGGIEFKPGREMVVPGDNVELTVTLIAPIAIEEGTKFSIREGGRTVGAGSVTKILK</sequence>
<keyword id="KW-0963">Cytoplasm</keyword>
<keyword id="KW-0903">Direct protein sequencing</keyword>
<keyword id="KW-0251">Elongation factor</keyword>
<keyword id="KW-0342">GTP-binding</keyword>
<keyword id="KW-0378">Hydrolase</keyword>
<keyword id="KW-0460">Magnesium</keyword>
<keyword id="KW-0479">Metal-binding</keyword>
<keyword id="KW-0547">Nucleotide-binding</keyword>
<keyword id="KW-0648">Protein biosynthesis</keyword>
<keyword id="KW-1185">Reference proteome</keyword>
<proteinExistence type="evidence at protein level"/>